<organism>
    <name type="scientific">Pelobacter propionicus (strain DSM 2379 / NBRC 103807 / OttBd1)</name>
    <dbReference type="NCBI Taxonomy" id="338966"/>
    <lineage>
        <taxon>Bacteria</taxon>
        <taxon>Pseudomonadati</taxon>
        <taxon>Thermodesulfobacteriota</taxon>
        <taxon>Desulfuromonadia</taxon>
        <taxon>Desulfuromonadales</taxon>
        <taxon>Desulfuromonadaceae</taxon>
        <taxon>Pelobacter</taxon>
    </lineage>
</organism>
<accession>A1ALV0</accession>
<dbReference type="EMBL" id="CP000482">
    <property type="protein sequence ID" value="ABK98320.1"/>
    <property type="molecule type" value="Genomic_DNA"/>
</dbReference>
<dbReference type="RefSeq" id="WP_011734632.1">
    <property type="nucleotide sequence ID" value="NC_008609.1"/>
</dbReference>
<dbReference type="SMR" id="A1ALV0"/>
<dbReference type="STRING" id="338966.Ppro_0689"/>
<dbReference type="KEGG" id="ppd:Ppro_0689"/>
<dbReference type="eggNOG" id="COG0186">
    <property type="taxonomic scope" value="Bacteria"/>
</dbReference>
<dbReference type="HOGENOM" id="CLU_073626_1_0_7"/>
<dbReference type="OrthoDB" id="9811714at2"/>
<dbReference type="Proteomes" id="UP000006732">
    <property type="component" value="Chromosome"/>
</dbReference>
<dbReference type="GO" id="GO:0022627">
    <property type="term" value="C:cytosolic small ribosomal subunit"/>
    <property type="evidence" value="ECO:0007669"/>
    <property type="project" value="TreeGrafter"/>
</dbReference>
<dbReference type="GO" id="GO:0019843">
    <property type="term" value="F:rRNA binding"/>
    <property type="evidence" value="ECO:0007669"/>
    <property type="project" value="UniProtKB-UniRule"/>
</dbReference>
<dbReference type="GO" id="GO:0003735">
    <property type="term" value="F:structural constituent of ribosome"/>
    <property type="evidence" value="ECO:0007669"/>
    <property type="project" value="InterPro"/>
</dbReference>
<dbReference type="GO" id="GO:0006412">
    <property type="term" value="P:translation"/>
    <property type="evidence" value="ECO:0007669"/>
    <property type="project" value="UniProtKB-UniRule"/>
</dbReference>
<dbReference type="CDD" id="cd00364">
    <property type="entry name" value="Ribosomal_uS17"/>
    <property type="match status" value="1"/>
</dbReference>
<dbReference type="Gene3D" id="2.40.50.140">
    <property type="entry name" value="Nucleic acid-binding proteins"/>
    <property type="match status" value="1"/>
</dbReference>
<dbReference type="HAMAP" id="MF_01345_B">
    <property type="entry name" value="Ribosomal_uS17_B"/>
    <property type="match status" value="1"/>
</dbReference>
<dbReference type="InterPro" id="IPR012340">
    <property type="entry name" value="NA-bd_OB-fold"/>
</dbReference>
<dbReference type="InterPro" id="IPR000266">
    <property type="entry name" value="Ribosomal_uS17"/>
</dbReference>
<dbReference type="InterPro" id="IPR019984">
    <property type="entry name" value="Ribosomal_uS17_bact/chlr"/>
</dbReference>
<dbReference type="InterPro" id="IPR019979">
    <property type="entry name" value="Ribosomal_uS17_CS"/>
</dbReference>
<dbReference type="NCBIfam" id="NF004123">
    <property type="entry name" value="PRK05610.1"/>
    <property type="match status" value="1"/>
</dbReference>
<dbReference type="NCBIfam" id="TIGR03635">
    <property type="entry name" value="uS17_bact"/>
    <property type="match status" value="1"/>
</dbReference>
<dbReference type="PANTHER" id="PTHR10744">
    <property type="entry name" value="40S RIBOSOMAL PROTEIN S11 FAMILY MEMBER"/>
    <property type="match status" value="1"/>
</dbReference>
<dbReference type="PANTHER" id="PTHR10744:SF1">
    <property type="entry name" value="SMALL RIBOSOMAL SUBUNIT PROTEIN US17M"/>
    <property type="match status" value="1"/>
</dbReference>
<dbReference type="Pfam" id="PF00366">
    <property type="entry name" value="Ribosomal_S17"/>
    <property type="match status" value="1"/>
</dbReference>
<dbReference type="PRINTS" id="PR00973">
    <property type="entry name" value="RIBOSOMALS17"/>
</dbReference>
<dbReference type="SUPFAM" id="SSF50249">
    <property type="entry name" value="Nucleic acid-binding proteins"/>
    <property type="match status" value="1"/>
</dbReference>
<dbReference type="PROSITE" id="PS00056">
    <property type="entry name" value="RIBOSOMAL_S17"/>
    <property type="match status" value="1"/>
</dbReference>
<reference key="1">
    <citation type="submission" date="2006-10" db="EMBL/GenBank/DDBJ databases">
        <title>Complete sequence of chromosome of Pelobacter propionicus DSM 2379.</title>
        <authorList>
            <consortium name="US DOE Joint Genome Institute"/>
            <person name="Copeland A."/>
            <person name="Lucas S."/>
            <person name="Lapidus A."/>
            <person name="Barry K."/>
            <person name="Detter J.C."/>
            <person name="Glavina del Rio T."/>
            <person name="Hammon N."/>
            <person name="Israni S."/>
            <person name="Dalin E."/>
            <person name="Tice H."/>
            <person name="Pitluck S."/>
            <person name="Saunders E."/>
            <person name="Brettin T."/>
            <person name="Bruce D."/>
            <person name="Han C."/>
            <person name="Tapia R."/>
            <person name="Schmutz J."/>
            <person name="Larimer F."/>
            <person name="Land M."/>
            <person name="Hauser L."/>
            <person name="Kyrpides N."/>
            <person name="Kim E."/>
            <person name="Lovley D."/>
            <person name="Richardson P."/>
        </authorList>
    </citation>
    <scope>NUCLEOTIDE SEQUENCE [LARGE SCALE GENOMIC DNA]</scope>
    <source>
        <strain>DSM 2379 / NBRC 103807 / OttBd1</strain>
    </source>
</reference>
<proteinExistence type="inferred from homology"/>
<sequence length="82" mass="9691">MSERGHRRTQNGVVVSDKMDKTVVVKVDRLIKHPVYNKYIKRSAKYKVHDENNVCKIGDRVQIIECRPLSKDKRWNLKQISN</sequence>
<name>RS17_PELPD</name>
<evidence type="ECO:0000255" key="1">
    <source>
        <dbReference type="HAMAP-Rule" id="MF_01345"/>
    </source>
</evidence>
<evidence type="ECO:0000305" key="2"/>
<keyword id="KW-1185">Reference proteome</keyword>
<keyword id="KW-0687">Ribonucleoprotein</keyword>
<keyword id="KW-0689">Ribosomal protein</keyword>
<keyword id="KW-0694">RNA-binding</keyword>
<keyword id="KW-0699">rRNA-binding</keyword>
<comment type="function">
    <text evidence="1">One of the primary rRNA binding proteins, it binds specifically to the 5'-end of 16S ribosomal RNA.</text>
</comment>
<comment type="subunit">
    <text evidence="1">Part of the 30S ribosomal subunit.</text>
</comment>
<comment type="similarity">
    <text evidence="1">Belongs to the universal ribosomal protein uS17 family.</text>
</comment>
<gene>
    <name evidence="1" type="primary">rpsQ</name>
    <name type="ordered locus">Ppro_0689</name>
</gene>
<feature type="chain" id="PRO_1000054989" description="Small ribosomal subunit protein uS17">
    <location>
        <begin position="1"/>
        <end position="82"/>
    </location>
</feature>
<protein>
    <recommendedName>
        <fullName evidence="1">Small ribosomal subunit protein uS17</fullName>
    </recommendedName>
    <alternativeName>
        <fullName evidence="2">30S ribosomal protein S17</fullName>
    </alternativeName>
</protein>